<dbReference type="EC" id="6.-.-.-" evidence="1"/>
<dbReference type="EMBL" id="CP000141">
    <property type="protein sequence ID" value="ABB14445.1"/>
    <property type="molecule type" value="Genomic_DNA"/>
</dbReference>
<dbReference type="RefSeq" id="WP_011344794.1">
    <property type="nucleotide sequence ID" value="NC_007503.1"/>
</dbReference>
<dbReference type="SMR" id="Q3AAW3"/>
<dbReference type="FunCoup" id="Q3AAW3">
    <property type="interactions" value="8"/>
</dbReference>
<dbReference type="STRING" id="246194.CHY_1902"/>
<dbReference type="KEGG" id="chy:CHY_1902"/>
<dbReference type="eggNOG" id="COG4365">
    <property type="taxonomic scope" value="Bacteria"/>
</dbReference>
<dbReference type="HOGENOM" id="CLU_022249_1_0_9"/>
<dbReference type="InParanoid" id="Q3AAW3"/>
<dbReference type="OrthoDB" id="9765151at2"/>
<dbReference type="Proteomes" id="UP000002706">
    <property type="component" value="Chromosome"/>
</dbReference>
<dbReference type="GO" id="GO:0016874">
    <property type="term" value="F:ligase activity"/>
    <property type="evidence" value="ECO:0007669"/>
    <property type="project" value="UniProtKB-UniRule"/>
</dbReference>
<dbReference type="HAMAP" id="MF_01867">
    <property type="entry name" value="BshC"/>
    <property type="match status" value="1"/>
</dbReference>
<dbReference type="InterPro" id="IPR011199">
    <property type="entry name" value="Bacillithiol_biosynth_BshC"/>
</dbReference>
<dbReference type="InterPro" id="IPR055399">
    <property type="entry name" value="CC_BshC"/>
</dbReference>
<dbReference type="InterPro" id="IPR055398">
    <property type="entry name" value="Rossmann-like_BshC"/>
</dbReference>
<dbReference type="NCBIfam" id="TIGR03998">
    <property type="entry name" value="thiol_BshC"/>
    <property type="match status" value="1"/>
</dbReference>
<dbReference type="Pfam" id="PF24850">
    <property type="entry name" value="CC_BshC"/>
    <property type="match status" value="1"/>
</dbReference>
<dbReference type="Pfam" id="PF10079">
    <property type="entry name" value="Rossmann-like_BshC"/>
    <property type="match status" value="1"/>
</dbReference>
<dbReference type="PIRSF" id="PIRSF012535">
    <property type="entry name" value="UCP012535"/>
    <property type="match status" value="1"/>
</dbReference>
<feature type="chain" id="PRO_0000378224" description="Putative cysteine ligase BshC">
    <location>
        <begin position="1"/>
        <end position="535"/>
    </location>
</feature>
<feature type="coiled-coil region" evidence="1">
    <location>
        <begin position="420"/>
        <end position="477"/>
    </location>
</feature>
<evidence type="ECO:0000255" key="1">
    <source>
        <dbReference type="HAMAP-Rule" id="MF_01867"/>
    </source>
</evidence>
<sequence length="535" mass="62432">MRYEEINLGYEKNLVRYYLTGYDRVAKFYHYNPWNTRSFYDRADYLKDKSNPEALYNLLSFYLKDFALDQKVVENLDKIKKGAFIVLTGQQPGFLTGPLYTIYKAVHAIIEAKRLSELLNHEVVPLFWIGSEDHDVEEVNFLYFPGKEGPQEIKIEFTDLRKIPAGLRPAEPETVEAIEKFEGLLPNFDYKEEVFTEIKKAYHSANLGQAFARLMLKLFGKFGLLVYDGLNPEFKRVTKGYLKNAFLKRDAIEKALFKVYTEQQSLGIEPQLDPCPNHCNMFIFKNDERIALEVAGEKVVSRDGEVSFTREEFLEFMERYPEKLSPNLVVRTSIQSLVFPVLAYVAGPGEIGYYGMLKEVYEIMGTQMPVILPRFTATLIEPRVEKALKEFALLPQEIYQDYDGVFHRVLERLDNLGIDDTFKALKESINSAYKNLQEKLAPLGADFQKLTGENLGRVMAQVKYLEERAQKYHREKNSKYIEKLWYLKTNFLPENEWQERVYNVFYYLAKYGFALIEKLLGIPFNPGKHYLLYLE</sequence>
<accession>Q3AAW3</accession>
<comment type="function">
    <text evidence="1">Involved in bacillithiol (BSH) biosynthesis. May catalyze the last step of the pathway, the addition of cysteine to glucosamine malate (GlcN-Mal) to generate BSH.</text>
</comment>
<comment type="similarity">
    <text evidence="1">Belongs to the BshC family.</text>
</comment>
<keyword id="KW-0175">Coiled coil</keyword>
<keyword id="KW-0436">Ligase</keyword>
<keyword id="KW-1185">Reference proteome</keyword>
<proteinExistence type="inferred from homology"/>
<gene>
    <name evidence="1" type="primary">bshC</name>
    <name type="ordered locus">CHY_1902</name>
</gene>
<reference key="1">
    <citation type="journal article" date="2005" name="PLoS Genet.">
        <title>Life in hot carbon monoxide: the complete genome sequence of Carboxydothermus hydrogenoformans Z-2901.</title>
        <authorList>
            <person name="Wu M."/>
            <person name="Ren Q."/>
            <person name="Durkin A.S."/>
            <person name="Daugherty S.C."/>
            <person name="Brinkac L.M."/>
            <person name="Dodson R.J."/>
            <person name="Madupu R."/>
            <person name="Sullivan S.A."/>
            <person name="Kolonay J.F."/>
            <person name="Nelson W.C."/>
            <person name="Tallon L.J."/>
            <person name="Jones K.M."/>
            <person name="Ulrich L.E."/>
            <person name="Gonzalez J.M."/>
            <person name="Zhulin I.B."/>
            <person name="Robb F.T."/>
            <person name="Eisen J.A."/>
        </authorList>
    </citation>
    <scope>NUCLEOTIDE SEQUENCE [LARGE SCALE GENOMIC DNA]</scope>
    <source>
        <strain>ATCC BAA-161 / DSM 6008 / Z-2901</strain>
    </source>
</reference>
<name>BSHC_CARHZ</name>
<organism>
    <name type="scientific">Carboxydothermus hydrogenoformans (strain ATCC BAA-161 / DSM 6008 / Z-2901)</name>
    <dbReference type="NCBI Taxonomy" id="246194"/>
    <lineage>
        <taxon>Bacteria</taxon>
        <taxon>Bacillati</taxon>
        <taxon>Bacillota</taxon>
        <taxon>Clostridia</taxon>
        <taxon>Thermoanaerobacterales</taxon>
        <taxon>Thermoanaerobacteraceae</taxon>
        <taxon>Carboxydothermus</taxon>
    </lineage>
</organism>
<protein>
    <recommendedName>
        <fullName evidence="1">Putative cysteine ligase BshC</fullName>
        <ecNumber evidence="1">6.-.-.-</ecNumber>
    </recommendedName>
</protein>